<organism>
    <name type="scientific">Halalkalibacterium halodurans (strain ATCC BAA-125 / DSM 18197 / FERM 7344 / JCM 9153 / C-125)</name>
    <name type="common">Bacillus halodurans</name>
    <dbReference type="NCBI Taxonomy" id="272558"/>
    <lineage>
        <taxon>Bacteria</taxon>
        <taxon>Bacillati</taxon>
        <taxon>Bacillota</taxon>
        <taxon>Bacilli</taxon>
        <taxon>Bacillales</taxon>
        <taxon>Bacillaceae</taxon>
        <taxon>Halalkalibacterium (ex Joshi et al. 2022)</taxon>
    </lineage>
</organism>
<reference key="1">
    <citation type="journal article" date="2000" name="Nucleic Acids Res.">
        <title>Complete genome sequence of the alkaliphilic bacterium Bacillus halodurans and genomic sequence comparison with Bacillus subtilis.</title>
        <authorList>
            <person name="Takami H."/>
            <person name="Nakasone K."/>
            <person name="Takaki Y."/>
            <person name="Maeno G."/>
            <person name="Sasaki R."/>
            <person name="Masui N."/>
            <person name="Fuji F."/>
            <person name="Hirama C."/>
            <person name="Nakamura Y."/>
            <person name="Ogasawara N."/>
            <person name="Kuhara S."/>
            <person name="Horikoshi K."/>
        </authorList>
    </citation>
    <scope>NUCLEOTIDE SEQUENCE [LARGE SCALE GENOMIC DNA]</scope>
    <source>
        <strain>ATCC BAA-125 / DSM 18197 / FERM 7344 / JCM 9153 / C-125</strain>
    </source>
</reference>
<evidence type="ECO:0000255" key="1">
    <source>
        <dbReference type="HAMAP-Rule" id="MF_01443"/>
    </source>
</evidence>
<accession>Q9K907</accession>
<gene>
    <name evidence="1" type="primary">prpE</name>
    <name type="ordered locus">BH2845</name>
</gene>
<protein>
    <recommendedName>
        <fullName evidence="1">Bis(5'-nucleosyl)-tetraphosphatase PrpE [asymmetrical]</fullName>
        <ecNumber evidence="1">3.6.1.17</ecNumber>
    </recommendedName>
    <alternativeName>
        <fullName evidence="1">Ap4A hydrolase</fullName>
    </alternativeName>
    <alternativeName>
        <fullName evidence="1">Diadenosine 5',5'''-P1,P4-tetraphosphate asymmetrical hydrolase</fullName>
        <shortName evidence="1">Diadenosine tetraphosphatase</shortName>
    </alternativeName>
</protein>
<keyword id="KW-0342">GTP-binding</keyword>
<keyword id="KW-0378">Hydrolase</keyword>
<keyword id="KW-0533">Nickel</keyword>
<keyword id="KW-0547">Nucleotide-binding</keyword>
<keyword id="KW-1185">Reference proteome</keyword>
<sequence length="246" mass="28191">MQFDIIGDVHGCYDELMELIDKLGYEYKRGSYDHPDGRLLAFVGDLTDRGPHSLEVIRLVSHMVKKKTAYYVPGNHCNKLYRYMIGRKVQVKHGLETTVAELNALSEEERIEVIAQFKELYEQAPLYHSFPEDKLVITHAGIREDDIGSYGKRVETFVLYGDITGETNPDGTPVRRDWAATYQGDWWIVYGHTPVRRPRIIHRTVNIDTGCVFGGALTALRFPEIEFVSIPSRQPLVSEKFRNFPG</sequence>
<name>PRPE_HALH5</name>
<dbReference type="EC" id="3.6.1.17" evidence="1"/>
<dbReference type="EMBL" id="BA000004">
    <property type="protein sequence ID" value="BAB06564.1"/>
    <property type="molecule type" value="Genomic_DNA"/>
</dbReference>
<dbReference type="PIR" id="E84005">
    <property type="entry name" value="E84005"/>
</dbReference>
<dbReference type="RefSeq" id="WP_010898992.1">
    <property type="nucleotide sequence ID" value="NC_002570.2"/>
</dbReference>
<dbReference type="SMR" id="Q9K907"/>
<dbReference type="STRING" id="272558.gene:10728755"/>
<dbReference type="GeneID" id="87598372"/>
<dbReference type="KEGG" id="bha:BH2845"/>
<dbReference type="eggNOG" id="COG0639">
    <property type="taxonomic scope" value="Bacteria"/>
</dbReference>
<dbReference type="HOGENOM" id="CLU_023125_3_0_9"/>
<dbReference type="OrthoDB" id="9807890at2"/>
<dbReference type="Proteomes" id="UP000001258">
    <property type="component" value="Chromosome"/>
</dbReference>
<dbReference type="GO" id="GO:0005737">
    <property type="term" value="C:cytoplasm"/>
    <property type="evidence" value="ECO:0007669"/>
    <property type="project" value="TreeGrafter"/>
</dbReference>
<dbReference type="GO" id="GO:0004081">
    <property type="term" value="F:bis(5'-nucleosyl)-tetraphosphatase (asymmetrical) activity"/>
    <property type="evidence" value="ECO:0007669"/>
    <property type="project" value="UniProtKB-UniRule"/>
</dbReference>
<dbReference type="GO" id="GO:0005525">
    <property type="term" value="F:GTP binding"/>
    <property type="evidence" value="ECO:0007669"/>
    <property type="project" value="UniProtKB-KW"/>
</dbReference>
<dbReference type="GO" id="GO:0016151">
    <property type="term" value="F:nickel cation binding"/>
    <property type="evidence" value="ECO:0007669"/>
    <property type="project" value="UniProtKB-UniRule"/>
</dbReference>
<dbReference type="GO" id="GO:0016791">
    <property type="term" value="F:phosphatase activity"/>
    <property type="evidence" value="ECO:0007669"/>
    <property type="project" value="TreeGrafter"/>
</dbReference>
<dbReference type="CDD" id="cd07423">
    <property type="entry name" value="MPP_Prp_like"/>
    <property type="match status" value="1"/>
</dbReference>
<dbReference type="Gene3D" id="3.60.21.10">
    <property type="match status" value="1"/>
</dbReference>
<dbReference type="HAMAP" id="MF_01443">
    <property type="entry name" value="PrpE"/>
    <property type="match status" value="1"/>
</dbReference>
<dbReference type="InterPro" id="IPR050126">
    <property type="entry name" value="Ap4A_hydrolase"/>
</dbReference>
<dbReference type="InterPro" id="IPR023937">
    <property type="entry name" value="Bis(5'-nucleosyl)-tetraP_PrpE"/>
</dbReference>
<dbReference type="InterPro" id="IPR004843">
    <property type="entry name" value="Calcineurin-like_PHP_ApaH"/>
</dbReference>
<dbReference type="InterPro" id="IPR029052">
    <property type="entry name" value="Metallo-depent_PP-like"/>
</dbReference>
<dbReference type="InterPro" id="IPR041780">
    <property type="entry name" value="MPP_PrpE-like"/>
</dbReference>
<dbReference type="InterPro" id="IPR006186">
    <property type="entry name" value="Ser/Thr-sp_prot-phosphatase"/>
</dbReference>
<dbReference type="NCBIfam" id="NF010148">
    <property type="entry name" value="PRK13625.1"/>
    <property type="match status" value="1"/>
</dbReference>
<dbReference type="PANTHER" id="PTHR42850:SF7">
    <property type="entry name" value="BIS(5'-NUCLEOSYL)-TETRAPHOSPHATASE PRPE [ASYMMETRICAL]"/>
    <property type="match status" value="1"/>
</dbReference>
<dbReference type="PANTHER" id="PTHR42850">
    <property type="entry name" value="METALLOPHOSPHOESTERASE"/>
    <property type="match status" value="1"/>
</dbReference>
<dbReference type="Pfam" id="PF00149">
    <property type="entry name" value="Metallophos"/>
    <property type="match status" value="1"/>
</dbReference>
<dbReference type="PRINTS" id="PR00114">
    <property type="entry name" value="STPHPHTASE"/>
</dbReference>
<dbReference type="SUPFAM" id="SSF56300">
    <property type="entry name" value="Metallo-dependent phosphatases"/>
    <property type="match status" value="1"/>
</dbReference>
<proteinExistence type="inferred from homology"/>
<feature type="chain" id="PRO_0000297699" description="Bis(5'-nucleosyl)-tetraphosphatase PrpE [asymmetrical]">
    <location>
        <begin position="1"/>
        <end position="246"/>
    </location>
</feature>
<comment type="function">
    <text evidence="1">Asymmetrically hydrolyzes Ap4p to yield AMP and ATP.</text>
</comment>
<comment type="catalytic activity">
    <reaction evidence="1">
        <text>P(1),P(4)-bis(5'-guanosyl) tetraphosphate + H2O = GMP + GTP + 2 H(+)</text>
        <dbReference type="Rhea" id="RHEA:22484"/>
        <dbReference type="ChEBI" id="CHEBI:15377"/>
        <dbReference type="ChEBI" id="CHEBI:15378"/>
        <dbReference type="ChEBI" id="CHEBI:37565"/>
        <dbReference type="ChEBI" id="CHEBI:57553"/>
        <dbReference type="ChEBI" id="CHEBI:58115"/>
        <dbReference type="EC" id="3.6.1.17"/>
    </reaction>
</comment>
<comment type="cofactor">
    <cofactor evidence="1">
        <name>Ni(2+)</name>
        <dbReference type="ChEBI" id="CHEBI:49786"/>
    </cofactor>
</comment>
<comment type="similarity">
    <text evidence="1">Belongs to the PrpE family.</text>
</comment>